<reference key="1">
    <citation type="journal article" date="1994" name="Microbiology">
        <title>Cloning and nucleotide sequencing of a 15 kb region of the Bacillus subtilis genome containing the iol operon.</title>
        <authorList>
            <person name="Yoshida K."/>
            <person name="Sano H."/>
            <person name="Miwa Y."/>
            <person name="Ogasawara N."/>
            <person name="Fujita Y."/>
        </authorList>
    </citation>
    <scope>NUCLEOTIDE SEQUENCE [GENOMIC DNA]</scope>
    <source>
        <strain>168 / BGSC1A1</strain>
    </source>
</reference>
<reference key="2">
    <citation type="journal article" date="1997" name="Nature">
        <title>The complete genome sequence of the Gram-positive bacterium Bacillus subtilis.</title>
        <authorList>
            <person name="Kunst F."/>
            <person name="Ogasawara N."/>
            <person name="Moszer I."/>
            <person name="Albertini A.M."/>
            <person name="Alloni G."/>
            <person name="Azevedo V."/>
            <person name="Bertero M.G."/>
            <person name="Bessieres P."/>
            <person name="Bolotin A."/>
            <person name="Borchert S."/>
            <person name="Borriss R."/>
            <person name="Boursier L."/>
            <person name="Brans A."/>
            <person name="Braun M."/>
            <person name="Brignell S.C."/>
            <person name="Bron S."/>
            <person name="Brouillet S."/>
            <person name="Bruschi C.V."/>
            <person name="Caldwell B."/>
            <person name="Capuano V."/>
            <person name="Carter N.M."/>
            <person name="Choi S.-K."/>
            <person name="Codani J.-J."/>
            <person name="Connerton I.F."/>
            <person name="Cummings N.J."/>
            <person name="Daniel R.A."/>
            <person name="Denizot F."/>
            <person name="Devine K.M."/>
            <person name="Duesterhoeft A."/>
            <person name="Ehrlich S.D."/>
            <person name="Emmerson P.T."/>
            <person name="Entian K.-D."/>
            <person name="Errington J."/>
            <person name="Fabret C."/>
            <person name="Ferrari E."/>
            <person name="Foulger D."/>
            <person name="Fritz C."/>
            <person name="Fujita M."/>
            <person name="Fujita Y."/>
            <person name="Fuma S."/>
            <person name="Galizzi A."/>
            <person name="Galleron N."/>
            <person name="Ghim S.-Y."/>
            <person name="Glaser P."/>
            <person name="Goffeau A."/>
            <person name="Golightly E.J."/>
            <person name="Grandi G."/>
            <person name="Guiseppi G."/>
            <person name="Guy B.J."/>
            <person name="Haga K."/>
            <person name="Haiech J."/>
            <person name="Harwood C.R."/>
            <person name="Henaut A."/>
            <person name="Hilbert H."/>
            <person name="Holsappel S."/>
            <person name="Hosono S."/>
            <person name="Hullo M.-F."/>
            <person name="Itaya M."/>
            <person name="Jones L.-M."/>
            <person name="Joris B."/>
            <person name="Karamata D."/>
            <person name="Kasahara Y."/>
            <person name="Klaerr-Blanchard M."/>
            <person name="Klein C."/>
            <person name="Kobayashi Y."/>
            <person name="Koetter P."/>
            <person name="Koningstein G."/>
            <person name="Krogh S."/>
            <person name="Kumano M."/>
            <person name="Kurita K."/>
            <person name="Lapidus A."/>
            <person name="Lardinois S."/>
            <person name="Lauber J."/>
            <person name="Lazarevic V."/>
            <person name="Lee S.-M."/>
            <person name="Levine A."/>
            <person name="Liu H."/>
            <person name="Masuda S."/>
            <person name="Mauel C."/>
            <person name="Medigue C."/>
            <person name="Medina N."/>
            <person name="Mellado R.P."/>
            <person name="Mizuno M."/>
            <person name="Moestl D."/>
            <person name="Nakai S."/>
            <person name="Noback M."/>
            <person name="Noone D."/>
            <person name="O'Reilly M."/>
            <person name="Ogawa K."/>
            <person name="Ogiwara A."/>
            <person name="Oudega B."/>
            <person name="Park S.-H."/>
            <person name="Parro V."/>
            <person name="Pohl T.M."/>
            <person name="Portetelle D."/>
            <person name="Porwollik S."/>
            <person name="Prescott A.M."/>
            <person name="Presecan E."/>
            <person name="Pujic P."/>
            <person name="Purnelle B."/>
            <person name="Rapoport G."/>
            <person name="Rey M."/>
            <person name="Reynolds S."/>
            <person name="Rieger M."/>
            <person name="Rivolta C."/>
            <person name="Rocha E."/>
            <person name="Roche B."/>
            <person name="Rose M."/>
            <person name="Sadaie Y."/>
            <person name="Sato T."/>
            <person name="Scanlan E."/>
            <person name="Schleich S."/>
            <person name="Schroeter R."/>
            <person name="Scoffone F."/>
            <person name="Sekiguchi J."/>
            <person name="Sekowska A."/>
            <person name="Seror S.J."/>
            <person name="Serror P."/>
            <person name="Shin B.-S."/>
            <person name="Soldo B."/>
            <person name="Sorokin A."/>
            <person name="Tacconi E."/>
            <person name="Takagi T."/>
            <person name="Takahashi H."/>
            <person name="Takemaru K."/>
            <person name="Takeuchi M."/>
            <person name="Tamakoshi A."/>
            <person name="Tanaka T."/>
            <person name="Terpstra P."/>
            <person name="Tognoni A."/>
            <person name="Tosato V."/>
            <person name="Uchiyama S."/>
            <person name="Vandenbol M."/>
            <person name="Vannier F."/>
            <person name="Vassarotti A."/>
            <person name="Viari A."/>
            <person name="Wambutt R."/>
            <person name="Wedler E."/>
            <person name="Wedler H."/>
            <person name="Weitzenegger T."/>
            <person name="Winters P."/>
            <person name="Wipat A."/>
            <person name="Yamamoto H."/>
            <person name="Yamane K."/>
            <person name="Yasumoto K."/>
            <person name="Yata K."/>
            <person name="Yoshida K."/>
            <person name="Yoshikawa H.-F."/>
            <person name="Zumstein E."/>
            <person name="Yoshikawa H."/>
            <person name="Danchin A."/>
        </authorList>
    </citation>
    <scope>NUCLEOTIDE SEQUENCE [LARGE SCALE GENOMIC DNA]</scope>
    <source>
        <strain>168</strain>
    </source>
</reference>
<reference key="3">
    <citation type="journal article" date="2009" name="Microbiology">
        <title>From a consortium sequence to a unified sequence: the Bacillus subtilis 168 reference genome a decade later.</title>
        <authorList>
            <person name="Barbe V."/>
            <person name="Cruveiller S."/>
            <person name="Kunst F."/>
            <person name="Lenoble P."/>
            <person name="Meurice G."/>
            <person name="Sekowska A."/>
            <person name="Vallenet D."/>
            <person name="Wang T."/>
            <person name="Moszer I."/>
            <person name="Medigue C."/>
            <person name="Danchin A."/>
        </authorList>
    </citation>
    <scope>SEQUENCE REVISION TO 82</scope>
</reference>
<reference key="4">
    <citation type="journal article" date="1995" name="DNA Res.">
        <title>Cloning and sequencing of a 36-kb region of the Bacillus subtilis genome between the gnt and iol operons.</title>
        <authorList>
            <person name="Yoshida K."/>
            <person name="Seki S."/>
            <person name="Fujimura M."/>
            <person name="Miwa Y."/>
            <person name="Fujita Y."/>
        </authorList>
    </citation>
    <scope>NUCLEOTIDE SEQUENCE [GENOMIC DNA] OF 1-71</scope>
    <source>
        <strain>168 / BGSC1A1</strain>
    </source>
</reference>
<reference key="5">
    <citation type="journal article" date="2008" name="J. Biol. Chem.">
        <title>Myo-inositol catabolism in Bacillus subtilis.</title>
        <authorList>
            <person name="Yoshida K."/>
            <person name="Yamaguchi M."/>
            <person name="Morinaga T."/>
            <person name="Kinehara M."/>
            <person name="Ikeuchi M."/>
            <person name="Ashida H."/>
            <person name="Fujita Y."/>
        </authorList>
    </citation>
    <scope>FUNCTION</scope>
    <scope>CATALYTIC ACTIVITY</scope>
    <source>
        <strain>168 / 60015</strain>
    </source>
</reference>
<keyword id="KW-0413">Isomerase</keyword>
<keyword id="KW-1185">Reference proteome</keyword>
<comment type="function">
    <text evidence="1">Involved in the isomerization of 5-deoxy-glucuronate (5DG) to 5-dehydro-2-deoxy-D-gluconate (DKG or 2-deoxy-5-keto-D-gluconate).</text>
</comment>
<comment type="catalytic activity">
    <reaction evidence="1">
        <text>5-deoxy-D-glucuronate = 5-dehydro-2-deoxy-D-gluconate</text>
        <dbReference type="Rhea" id="RHEA:25840"/>
        <dbReference type="ChEBI" id="CHEBI:16669"/>
        <dbReference type="ChEBI" id="CHEBI:58852"/>
        <dbReference type="EC" id="5.3.1.30"/>
    </reaction>
</comment>
<comment type="pathway">
    <text>Polyol metabolism; myo-inositol degradation into acetyl-CoA; acetyl-CoA from myo-inositol: step 4/7.</text>
</comment>
<comment type="similarity">
    <text evidence="2">Belongs to the isomerase IolB family.</text>
</comment>
<dbReference type="EC" id="5.3.1.30"/>
<dbReference type="EMBL" id="D14399">
    <property type="protein sequence ID" value="BAA03291.1"/>
    <property type="molecule type" value="Genomic_DNA"/>
</dbReference>
<dbReference type="EMBL" id="AL009126">
    <property type="protein sequence ID" value="CAB16011.2"/>
    <property type="molecule type" value="Genomic_DNA"/>
</dbReference>
<dbReference type="EMBL" id="AB005554">
    <property type="protein sequence ID" value="BAA21610.1"/>
    <property type="molecule type" value="Genomic_DNA"/>
</dbReference>
<dbReference type="PIR" id="B69645">
    <property type="entry name" value="B69645"/>
</dbReference>
<dbReference type="RefSeq" id="NP_391854.2">
    <property type="nucleotide sequence ID" value="NC_000964.3"/>
</dbReference>
<dbReference type="RefSeq" id="WP_003243247.1">
    <property type="nucleotide sequence ID" value="NZ_OZ025638.1"/>
</dbReference>
<dbReference type="SMR" id="P42413"/>
<dbReference type="FunCoup" id="P42413">
    <property type="interactions" value="57"/>
</dbReference>
<dbReference type="STRING" id="224308.BSU39750"/>
<dbReference type="PaxDb" id="224308-BSU39750"/>
<dbReference type="EnsemblBacteria" id="CAB16011">
    <property type="protein sequence ID" value="CAB16011"/>
    <property type="gene ID" value="BSU_39750"/>
</dbReference>
<dbReference type="GeneID" id="937580"/>
<dbReference type="KEGG" id="bsu:BSU39750"/>
<dbReference type="PATRIC" id="fig|224308.179.peg.4300"/>
<dbReference type="eggNOG" id="COG3718">
    <property type="taxonomic scope" value="Bacteria"/>
</dbReference>
<dbReference type="InParanoid" id="P42413"/>
<dbReference type="OrthoDB" id="9799936at2"/>
<dbReference type="PhylomeDB" id="P42413"/>
<dbReference type="BioCyc" id="BSUB:BSU39750-MONOMER"/>
<dbReference type="BioCyc" id="MetaCyc:BSU39750-MONOMER"/>
<dbReference type="BRENDA" id="5.3.1.30">
    <property type="organism ID" value="658"/>
</dbReference>
<dbReference type="UniPathway" id="UPA00076">
    <property type="reaction ID" value="UER00920"/>
</dbReference>
<dbReference type="Proteomes" id="UP000001570">
    <property type="component" value="Chromosome"/>
</dbReference>
<dbReference type="GO" id="GO:0102482">
    <property type="term" value="F:5-deoxy-D-glucuronate isomerase activity"/>
    <property type="evidence" value="ECO:0007669"/>
    <property type="project" value="UniProtKB-EC"/>
</dbReference>
<dbReference type="GO" id="GO:0008880">
    <property type="term" value="F:glucuronate isomerase activity"/>
    <property type="evidence" value="ECO:0007669"/>
    <property type="project" value="InterPro"/>
</dbReference>
<dbReference type="GO" id="GO:0019310">
    <property type="term" value="P:inositol catabolic process"/>
    <property type="evidence" value="ECO:0007669"/>
    <property type="project" value="UniProtKB-UniRule"/>
</dbReference>
<dbReference type="Gene3D" id="2.60.120.10">
    <property type="entry name" value="Jelly Rolls"/>
    <property type="match status" value="2"/>
</dbReference>
<dbReference type="HAMAP" id="MF_01673">
    <property type="entry name" value="IolB"/>
    <property type="match status" value="1"/>
</dbReference>
<dbReference type="InterPro" id="IPR024203">
    <property type="entry name" value="Deoxy-glucuronate_isom_IolB"/>
</dbReference>
<dbReference type="InterPro" id="IPR023770">
    <property type="entry name" value="IolB_Bacilli"/>
</dbReference>
<dbReference type="InterPro" id="IPR021120">
    <property type="entry name" value="KduI/IolB_isomerase"/>
</dbReference>
<dbReference type="InterPro" id="IPR014710">
    <property type="entry name" value="RmlC-like_jellyroll"/>
</dbReference>
<dbReference type="InterPro" id="IPR011051">
    <property type="entry name" value="RmlC_Cupin_sf"/>
</dbReference>
<dbReference type="NCBIfam" id="TIGR04378">
    <property type="entry name" value="myo_inos_iolB"/>
    <property type="match status" value="1"/>
</dbReference>
<dbReference type="PANTHER" id="PTHR39193">
    <property type="entry name" value="5-DEOXY-GLUCURONATE ISOMERASE"/>
    <property type="match status" value="1"/>
</dbReference>
<dbReference type="PANTHER" id="PTHR39193:SF1">
    <property type="entry name" value="5-DEOXY-GLUCURONATE ISOMERASE"/>
    <property type="match status" value="1"/>
</dbReference>
<dbReference type="Pfam" id="PF04962">
    <property type="entry name" value="KduI"/>
    <property type="match status" value="1"/>
</dbReference>
<dbReference type="PIRSF" id="PIRSF036628">
    <property type="entry name" value="IolB"/>
    <property type="match status" value="1"/>
</dbReference>
<dbReference type="SUPFAM" id="SSF51182">
    <property type="entry name" value="RmlC-like cupins"/>
    <property type="match status" value="1"/>
</dbReference>
<feature type="chain" id="PRO_0000084212" description="5-deoxy-glucuronate isomerase">
    <location>
        <begin position="1"/>
        <end position="271"/>
    </location>
</feature>
<feature type="sequence conflict" description="In Ref. 1; BAA03291." evidence="2" ref="1">
    <original>V</original>
    <variation>Y</variation>
    <location>
        <position position="82"/>
    </location>
</feature>
<sequence length="271" mass="30706">MSYLLRKPQSHEVSNGVKLVHEVTTSNSDLTYVEFKVLDLASGSSYTEELKKQEICIVAVTGKITVTDHESTFENIGTRESVFERKPTDSVYISNDRAFEITAVSDARVALCYSPSEKQLPTKLIKAEDNGIEHRGQFSNKRTVHNILPDSDPSANSLLVVEVYTDSGNWSSYPPHKHDQDNLPEESFLEETYYHELDPGQGFVFQRVYTDDRSIDETMTVGNENVVIVPAGYHPVGVPDGYTSYYLNVMAGPTRKWKFYNDPAHEWILER</sequence>
<protein>
    <recommendedName>
        <fullName>5-deoxy-glucuronate isomerase</fullName>
        <shortName>5DG isomerase</shortName>
        <ecNumber>5.3.1.30</ecNumber>
    </recommendedName>
</protein>
<evidence type="ECO:0000269" key="1">
    <source>
    </source>
</evidence>
<evidence type="ECO:0000305" key="2"/>
<proteinExistence type="evidence at protein level"/>
<accession>P42413</accession>
<gene>
    <name type="primary">iolB</name>
    <name type="synonym">yxdB</name>
    <name type="ordered locus">BSU39750</name>
    <name type="ORF">E83B</name>
</gene>
<name>IOLB_BACSU</name>
<organism>
    <name type="scientific">Bacillus subtilis (strain 168)</name>
    <dbReference type="NCBI Taxonomy" id="224308"/>
    <lineage>
        <taxon>Bacteria</taxon>
        <taxon>Bacillati</taxon>
        <taxon>Bacillota</taxon>
        <taxon>Bacilli</taxon>
        <taxon>Bacillales</taxon>
        <taxon>Bacillaceae</taxon>
        <taxon>Bacillus</taxon>
    </lineage>
</organism>